<organism>
    <name type="scientific">Pectobacterium atrosepticum (strain SCRI 1043 / ATCC BAA-672)</name>
    <name type="common">Erwinia carotovora subsp. atroseptica</name>
    <dbReference type="NCBI Taxonomy" id="218491"/>
    <lineage>
        <taxon>Bacteria</taxon>
        <taxon>Pseudomonadati</taxon>
        <taxon>Pseudomonadota</taxon>
        <taxon>Gammaproteobacteria</taxon>
        <taxon>Enterobacterales</taxon>
        <taxon>Pectobacteriaceae</taxon>
        <taxon>Pectobacterium</taxon>
    </lineage>
</organism>
<protein>
    <recommendedName>
        <fullName evidence="3">3-oxo-tetronate 4-phosphate decarboxylase</fullName>
        <ecNumber evidence="2">4.1.1.104</ecNumber>
    </recommendedName>
</protein>
<reference key="1">
    <citation type="journal article" date="2004" name="Proc. Natl. Acad. Sci. U.S.A.">
        <title>Genome sequence of the enterobacterial phytopathogen Erwinia carotovora subsp. atroseptica and characterization of virulence factors.</title>
        <authorList>
            <person name="Bell K.S."/>
            <person name="Sebaihia M."/>
            <person name="Pritchard L."/>
            <person name="Holden M.T.G."/>
            <person name="Hyman L.J."/>
            <person name="Holeva M.C."/>
            <person name="Thomson N.R."/>
            <person name="Bentley S.D."/>
            <person name="Churcher L.J.C."/>
            <person name="Mungall K."/>
            <person name="Atkin R."/>
            <person name="Bason N."/>
            <person name="Brooks K."/>
            <person name="Chillingworth T."/>
            <person name="Clark K."/>
            <person name="Doggett J."/>
            <person name="Fraser A."/>
            <person name="Hance Z."/>
            <person name="Hauser H."/>
            <person name="Jagels K."/>
            <person name="Moule S."/>
            <person name="Norbertczak H."/>
            <person name="Ormond D."/>
            <person name="Price C."/>
            <person name="Quail M.A."/>
            <person name="Sanders M."/>
            <person name="Walker D."/>
            <person name="Whitehead S."/>
            <person name="Salmond G.P.C."/>
            <person name="Birch P.R.J."/>
            <person name="Parkhill J."/>
            <person name="Toth I.K."/>
        </authorList>
    </citation>
    <scope>NUCLEOTIDE SEQUENCE [LARGE SCALE GENOMIC DNA]</scope>
    <source>
        <strain>SCRI 1043 / ATCC BAA-672</strain>
    </source>
</reference>
<reference key="2">
    <citation type="journal article" date="2016" name="Proc. Natl. Acad. Sci. U.S.A.">
        <title>Assignment of function to a domain of unknown function: DUF1537 is a new kinase family in catabolic pathways for acid sugars.</title>
        <authorList>
            <person name="Zhang X."/>
            <person name="Carter M.S."/>
            <person name="Vetting M.W."/>
            <person name="San Francisco B."/>
            <person name="Zhao S."/>
            <person name="Al-Obaidi N.F."/>
            <person name="Solbiati J.O."/>
            <person name="Thiaville J.J."/>
            <person name="de Crecy-Lagard V."/>
            <person name="Jacobson M.P."/>
            <person name="Almo S.C."/>
            <person name="Gerlt J.A."/>
        </authorList>
    </citation>
    <scope>FUNCTION</scope>
    <scope>CATALYTIC ACTIVITY</scope>
    <source>
        <strain>SCRI 1043 / ATCC BAA-672</strain>
    </source>
</reference>
<feature type="chain" id="PRO_0000439752" description="3-oxo-tetronate 4-phosphate decarboxylase">
    <location>
        <begin position="1"/>
        <end position="218"/>
    </location>
</feature>
<feature type="active site" description="Proton acceptor" evidence="1">
    <location>
        <position position="86"/>
    </location>
</feature>
<feature type="active site" description="Proton donor" evidence="1">
    <location>
        <position position="132"/>
    </location>
</feature>
<feature type="binding site" evidence="1">
    <location>
        <position position="86"/>
    </location>
    <ligand>
        <name>Zn(2+)</name>
        <dbReference type="ChEBI" id="CHEBI:29105"/>
    </ligand>
</feature>
<feature type="binding site" evidence="1">
    <location>
        <position position="105"/>
    </location>
    <ligand>
        <name>Zn(2+)</name>
        <dbReference type="ChEBI" id="CHEBI:29105"/>
    </ligand>
</feature>
<feature type="binding site" evidence="1">
    <location>
        <position position="107"/>
    </location>
    <ligand>
        <name>Zn(2+)</name>
        <dbReference type="ChEBI" id="CHEBI:29105"/>
    </ligand>
</feature>
<feature type="binding site" evidence="1">
    <location>
        <position position="172"/>
    </location>
    <ligand>
        <name>Zn(2+)</name>
        <dbReference type="ChEBI" id="CHEBI:29105"/>
    </ligand>
</feature>
<name>OTNC_PECAS</name>
<proteinExistence type="evidence at protein level"/>
<gene>
    <name evidence="3" type="primary">otnC</name>
    <name evidence="5" type="ordered locus">ECA4329</name>
</gene>
<sequence>MSEHHNGTEASLSSEQRARAEMVKLGASFFQRGYATGSAGNLSLLLDDGTLLATPTGSCLGELDAERLSKVSLSGEWISGDKPSKEVSFHLSIYRNDPECKAIVHLHSTYLTALSCLEGLDTQDAIKPFTPYVVMRVGKVPVVPYYRPGDARLGEDLAKLASRYKAFLLANHGPVVTGKNLRAAADNMEELEETAKLIFILGDRKIRYLTADDIAELS</sequence>
<comment type="function">
    <text evidence="2">Catalyzes the decarboxylation of 3-oxo-tetronate 4-phosphate to dihydroxyacetone phosphate (DHAP) and CO(2).</text>
</comment>
<comment type="catalytic activity">
    <reaction evidence="2">
        <text>3-dehydro-4-O-phospho-D-erythronate + H(+) = dihydroxyacetone phosphate + CO2</text>
        <dbReference type="Rhea" id="RHEA:52416"/>
        <dbReference type="ChEBI" id="CHEBI:15378"/>
        <dbReference type="ChEBI" id="CHEBI:16526"/>
        <dbReference type="ChEBI" id="CHEBI:57642"/>
        <dbReference type="ChEBI" id="CHEBI:136593"/>
        <dbReference type="EC" id="4.1.1.104"/>
    </reaction>
</comment>
<comment type="catalytic activity">
    <reaction evidence="2">
        <text>3-dehydro-4-O-phospho-L-erythronate + H(+) = dihydroxyacetone phosphate + CO2</text>
        <dbReference type="Rhea" id="RHEA:52404"/>
        <dbReference type="ChEBI" id="CHEBI:15378"/>
        <dbReference type="ChEBI" id="CHEBI:16526"/>
        <dbReference type="ChEBI" id="CHEBI:57642"/>
        <dbReference type="ChEBI" id="CHEBI:136592"/>
        <dbReference type="EC" id="4.1.1.104"/>
    </reaction>
</comment>
<comment type="cofactor">
    <cofactor evidence="1">
        <name>Zn(2+)</name>
        <dbReference type="ChEBI" id="CHEBI:29105"/>
    </cofactor>
    <text evidence="1">Binds 1 zinc ion per subunit.</text>
</comment>
<comment type="similarity">
    <text evidence="4">Belongs to the aldolase class II family. AraD/FucA subfamily.</text>
</comment>
<dbReference type="EC" id="4.1.1.104" evidence="2"/>
<dbReference type="EMBL" id="BX950851">
    <property type="protein sequence ID" value="CAG77226.1"/>
    <property type="molecule type" value="Genomic_DNA"/>
</dbReference>
<dbReference type="RefSeq" id="WP_011095793.1">
    <property type="nucleotide sequence ID" value="NC_004547.2"/>
</dbReference>
<dbReference type="SMR" id="Q6CZ24"/>
<dbReference type="STRING" id="218491.ECA4329"/>
<dbReference type="GeneID" id="57211022"/>
<dbReference type="KEGG" id="eca:ECA4329"/>
<dbReference type="PATRIC" id="fig|218491.5.peg.4408"/>
<dbReference type="eggNOG" id="COG0235">
    <property type="taxonomic scope" value="Bacteria"/>
</dbReference>
<dbReference type="HOGENOM" id="CLU_006033_3_2_6"/>
<dbReference type="OrthoDB" id="5500703at2"/>
<dbReference type="BRENDA" id="4.1.1.104">
    <property type="organism ID" value="9330"/>
</dbReference>
<dbReference type="Proteomes" id="UP000007966">
    <property type="component" value="Chromosome"/>
</dbReference>
<dbReference type="GO" id="GO:0005829">
    <property type="term" value="C:cytosol"/>
    <property type="evidence" value="ECO:0007669"/>
    <property type="project" value="TreeGrafter"/>
</dbReference>
<dbReference type="GO" id="GO:0016832">
    <property type="term" value="F:aldehyde-lyase activity"/>
    <property type="evidence" value="ECO:0007669"/>
    <property type="project" value="InterPro"/>
</dbReference>
<dbReference type="GO" id="GO:0046872">
    <property type="term" value="F:metal ion binding"/>
    <property type="evidence" value="ECO:0007669"/>
    <property type="project" value="UniProtKB-KW"/>
</dbReference>
<dbReference type="GO" id="GO:0019323">
    <property type="term" value="P:pentose catabolic process"/>
    <property type="evidence" value="ECO:0007669"/>
    <property type="project" value="InterPro"/>
</dbReference>
<dbReference type="FunFam" id="3.40.225.10:FF:000008">
    <property type="entry name" value="Sugar aldolase"/>
    <property type="match status" value="1"/>
</dbReference>
<dbReference type="Gene3D" id="3.40.225.10">
    <property type="entry name" value="Class II aldolase/adducin N-terminal domain"/>
    <property type="match status" value="1"/>
</dbReference>
<dbReference type="InterPro" id="IPR050197">
    <property type="entry name" value="Aldolase_class_II_sugar_metab"/>
</dbReference>
<dbReference type="InterPro" id="IPR001303">
    <property type="entry name" value="Aldolase_II/adducin_N"/>
</dbReference>
<dbReference type="InterPro" id="IPR036409">
    <property type="entry name" value="Aldolase_II/adducin_N_sf"/>
</dbReference>
<dbReference type="InterPro" id="IPR050013">
    <property type="entry name" value="OtnC"/>
</dbReference>
<dbReference type="NCBIfam" id="NF043034">
    <property type="entry name" value="OxoTetrPhDc"/>
    <property type="match status" value="1"/>
</dbReference>
<dbReference type="NCBIfam" id="NF006000">
    <property type="entry name" value="PRK08130.1"/>
    <property type="match status" value="1"/>
</dbReference>
<dbReference type="PANTHER" id="PTHR22789:SF0">
    <property type="entry name" value="3-OXO-TETRONATE 4-PHOSPHATE DECARBOXYLASE-RELATED"/>
    <property type="match status" value="1"/>
</dbReference>
<dbReference type="PANTHER" id="PTHR22789">
    <property type="entry name" value="FUCULOSE PHOSPHATE ALDOLASE"/>
    <property type="match status" value="1"/>
</dbReference>
<dbReference type="Pfam" id="PF00596">
    <property type="entry name" value="Aldolase_II"/>
    <property type="match status" value="1"/>
</dbReference>
<dbReference type="SMART" id="SM01007">
    <property type="entry name" value="Aldolase_II"/>
    <property type="match status" value="1"/>
</dbReference>
<dbReference type="SUPFAM" id="SSF53639">
    <property type="entry name" value="AraD/HMP-PK domain-like"/>
    <property type="match status" value="1"/>
</dbReference>
<accession>Q6CZ24</accession>
<keyword id="KW-0119">Carbohydrate metabolism</keyword>
<keyword id="KW-0456">Lyase</keyword>
<keyword id="KW-0479">Metal-binding</keyword>
<keyword id="KW-1185">Reference proteome</keyword>
<keyword id="KW-0862">Zinc</keyword>
<evidence type="ECO:0000250" key="1">
    <source>
        <dbReference type="UniProtKB" id="P0AB87"/>
    </source>
</evidence>
<evidence type="ECO:0000269" key="2">
    <source>
    </source>
</evidence>
<evidence type="ECO:0000303" key="3">
    <source>
    </source>
</evidence>
<evidence type="ECO:0000305" key="4"/>
<evidence type="ECO:0000312" key="5">
    <source>
        <dbReference type="EMBL" id="CAG77226.1"/>
    </source>
</evidence>